<proteinExistence type="inferred from homology"/>
<protein>
    <recommendedName>
        <fullName evidence="1">Phospho-N-acetylmuramoyl-pentapeptide-transferase</fullName>
        <ecNumber evidence="1">2.7.8.13</ecNumber>
    </recommendedName>
    <alternativeName>
        <fullName evidence="1">UDP-MurNAc-pentapeptide phosphotransferase</fullName>
    </alternativeName>
</protein>
<sequence length="352" mass="39460">MLYLTNYTDYMFFSYISVRAGFAFFIALFLSLYFMPKFIKWAQNKKANQPIYEYAPQSHQAKSHTPTMGGLIFIFATIVASLLCADLNNFYVIIGILCLVLFCTIGLVDDLGKILKKDNHAGLSPRMKLLSQFIASFICVFFLYIMGINTEFYLPFYKYALFDGGIFMLALWILVIISSSNAVNLTDGLDGLATVPSIFSLLSLSAFLYLSGNAIYSSYLFLPKIQGLGELVVLSAALVGALMGFLWYNCYPAQVFMGDSGSLSIGAFLGYLGIVSKNEILLLLIGFVFVLETISVILQVGSFKIFNKRVFKMAPIHHHFEKIGWVENKIIVRFWMIALLANIIALISIKLR</sequence>
<reference key="1">
    <citation type="journal article" date="2008" name="Foodborne Pathog. Dis.">
        <title>The complete genome sequence and analysis of the human pathogen Campylobacter lari.</title>
        <authorList>
            <person name="Miller W.G."/>
            <person name="Wang G."/>
            <person name="Binnewies T.T."/>
            <person name="Parker C.T."/>
        </authorList>
    </citation>
    <scope>NUCLEOTIDE SEQUENCE [LARGE SCALE GENOMIC DNA]</scope>
    <source>
        <strain>RM2100 / D67 / ATCC BAA-1060</strain>
    </source>
</reference>
<feature type="chain" id="PRO_1000117170" description="Phospho-N-acetylmuramoyl-pentapeptide-transferase">
    <location>
        <begin position="1"/>
        <end position="352"/>
    </location>
</feature>
<feature type="transmembrane region" description="Helical" evidence="1">
    <location>
        <begin position="10"/>
        <end position="30"/>
    </location>
</feature>
<feature type="transmembrane region" description="Helical" evidence="1">
    <location>
        <begin position="67"/>
        <end position="87"/>
    </location>
</feature>
<feature type="transmembrane region" description="Helical" evidence="1">
    <location>
        <begin position="88"/>
        <end position="108"/>
    </location>
</feature>
<feature type="transmembrane region" description="Helical" evidence="1">
    <location>
        <begin position="129"/>
        <end position="149"/>
    </location>
</feature>
<feature type="transmembrane region" description="Helical" evidence="1">
    <location>
        <begin position="159"/>
        <end position="179"/>
    </location>
</feature>
<feature type="transmembrane region" description="Helical" evidence="1">
    <location>
        <begin position="191"/>
        <end position="211"/>
    </location>
</feature>
<feature type="transmembrane region" description="Helical" evidence="1">
    <location>
        <begin position="227"/>
        <end position="247"/>
    </location>
</feature>
<feature type="transmembrane region" description="Helical" evidence="1">
    <location>
        <begin position="255"/>
        <end position="275"/>
    </location>
</feature>
<feature type="transmembrane region" description="Helical" evidence="1">
    <location>
        <begin position="280"/>
        <end position="300"/>
    </location>
</feature>
<feature type="transmembrane region" description="Helical" evidence="1">
    <location>
        <begin position="329"/>
        <end position="349"/>
    </location>
</feature>
<dbReference type="EC" id="2.7.8.13" evidence="1"/>
<dbReference type="EMBL" id="CP000932">
    <property type="protein sequence ID" value="ACM63630.1"/>
    <property type="molecule type" value="Genomic_DNA"/>
</dbReference>
<dbReference type="RefSeq" id="WP_012661014.1">
    <property type="nucleotide sequence ID" value="NC_012039.1"/>
</dbReference>
<dbReference type="SMR" id="B9KEZ5"/>
<dbReference type="STRING" id="306263.Cla_0267"/>
<dbReference type="KEGG" id="cla:CLA_0267"/>
<dbReference type="PATRIC" id="fig|306263.5.peg.265"/>
<dbReference type="eggNOG" id="COG0472">
    <property type="taxonomic scope" value="Bacteria"/>
</dbReference>
<dbReference type="HOGENOM" id="CLU_023982_0_0_7"/>
<dbReference type="UniPathway" id="UPA00219"/>
<dbReference type="Proteomes" id="UP000007727">
    <property type="component" value="Chromosome"/>
</dbReference>
<dbReference type="GO" id="GO:0005886">
    <property type="term" value="C:plasma membrane"/>
    <property type="evidence" value="ECO:0007669"/>
    <property type="project" value="UniProtKB-SubCell"/>
</dbReference>
<dbReference type="GO" id="GO:0046872">
    <property type="term" value="F:metal ion binding"/>
    <property type="evidence" value="ECO:0007669"/>
    <property type="project" value="UniProtKB-KW"/>
</dbReference>
<dbReference type="GO" id="GO:0008963">
    <property type="term" value="F:phospho-N-acetylmuramoyl-pentapeptide-transferase activity"/>
    <property type="evidence" value="ECO:0007669"/>
    <property type="project" value="UniProtKB-UniRule"/>
</dbReference>
<dbReference type="GO" id="GO:0051992">
    <property type="term" value="F:UDP-N-acetylmuramoyl-L-alanyl-D-glutamyl-meso-2,6-diaminopimelyl-D-alanyl-D-alanine:undecaprenyl-phosphate transferase activity"/>
    <property type="evidence" value="ECO:0007669"/>
    <property type="project" value="RHEA"/>
</dbReference>
<dbReference type="GO" id="GO:0051301">
    <property type="term" value="P:cell division"/>
    <property type="evidence" value="ECO:0007669"/>
    <property type="project" value="UniProtKB-KW"/>
</dbReference>
<dbReference type="GO" id="GO:0071555">
    <property type="term" value="P:cell wall organization"/>
    <property type="evidence" value="ECO:0007669"/>
    <property type="project" value="UniProtKB-KW"/>
</dbReference>
<dbReference type="GO" id="GO:0009252">
    <property type="term" value="P:peptidoglycan biosynthetic process"/>
    <property type="evidence" value="ECO:0007669"/>
    <property type="project" value="UniProtKB-UniRule"/>
</dbReference>
<dbReference type="GO" id="GO:0008360">
    <property type="term" value="P:regulation of cell shape"/>
    <property type="evidence" value="ECO:0007669"/>
    <property type="project" value="UniProtKB-KW"/>
</dbReference>
<dbReference type="CDD" id="cd06852">
    <property type="entry name" value="GT_MraY"/>
    <property type="match status" value="1"/>
</dbReference>
<dbReference type="HAMAP" id="MF_00038">
    <property type="entry name" value="MraY"/>
    <property type="match status" value="1"/>
</dbReference>
<dbReference type="InterPro" id="IPR000715">
    <property type="entry name" value="Glycosyl_transferase_4"/>
</dbReference>
<dbReference type="InterPro" id="IPR003524">
    <property type="entry name" value="PNAcMuramoyl-5peptid_Trfase"/>
</dbReference>
<dbReference type="InterPro" id="IPR018480">
    <property type="entry name" value="PNAcMuramoyl-5peptid_Trfase_CS"/>
</dbReference>
<dbReference type="NCBIfam" id="TIGR00445">
    <property type="entry name" value="mraY"/>
    <property type="match status" value="1"/>
</dbReference>
<dbReference type="PANTHER" id="PTHR22926">
    <property type="entry name" value="PHOSPHO-N-ACETYLMURAMOYL-PENTAPEPTIDE-TRANSFERASE"/>
    <property type="match status" value="1"/>
</dbReference>
<dbReference type="PANTHER" id="PTHR22926:SF5">
    <property type="entry name" value="PHOSPHO-N-ACETYLMURAMOYL-PENTAPEPTIDE-TRANSFERASE HOMOLOG"/>
    <property type="match status" value="1"/>
</dbReference>
<dbReference type="Pfam" id="PF00953">
    <property type="entry name" value="Glycos_transf_4"/>
    <property type="match status" value="1"/>
</dbReference>
<dbReference type="PROSITE" id="PS01347">
    <property type="entry name" value="MRAY_1"/>
    <property type="match status" value="1"/>
</dbReference>
<dbReference type="PROSITE" id="PS01348">
    <property type="entry name" value="MRAY_2"/>
    <property type="match status" value="1"/>
</dbReference>
<gene>
    <name evidence="1" type="primary">mraY</name>
    <name type="ordered locus">Cla_0267</name>
</gene>
<comment type="function">
    <text evidence="1">Catalyzes the initial step of the lipid cycle reactions in the biosynthesis of the cell wall peptidoglycan: transfers peptidoglycan precursor phospho-MurNAc-pentapeptide from UDP-MurNAc-pentapeptide onto the lipid carrier undecaprenyl phosphate, yielding undecaprenyl-pyrophosphoryl-MurNAc-pentapeptide, known as lipid I.</text>
</comment>
<comment type="catalytic activity">
    <reaction evidence="1">
        <text>UDP-N-acetyl-alpha-D-muramoyl-L-alanyl-gamma-D-glutamyl-meso-2,6-diaminopimeloyl-D-alanyl-D-alanine + di-trans,octa-cis-undecaprenyl phosphate = di-trans,octa-cis-undecaprenyl diphospho-N-acetyl-alpha-D-muramoyl-L-alanyl-D-glutamyl-meso-2,6-diaminopimeloyl-D-alanyl-D-alanine + UMP</text>
        <dbReference type="Rhea" id="RHEA:28386"/>
        <dbReference type="ChEBI" id="CHEBI:57865"/>
        <dbReference type="ChEBI" id="CHEBI:60392"/>
        <dbReference type="ChEBI" id="CHEBI:61386"/>
        <dbReference type="ChEBI" id="CHEBI:61387"/>
        <dbReference type="EC" id="2.7.8.13"/>
    </reaction>
</comment>
<comment type="cofactor">
    <cofactor evidence="1">
        <name>Mg(2+)</name>
        <dbReference type="ChEBI" id="CHEBI:18420"/>
    </cofactor>
</comment>
<comment type="pathway">
    <text evidence="1">Cell wall biogenesis; peptidoglycan biosynthesis.</text>
</comment>
<comment type="subcellular location">
    <subcellularLocation>
        <location evidence="1">Cell inner membrane</location>
        <topology evidence="1">Multi-pass membrane protein</topology>
    </subcellularLocation>
</comment>
<comment type="similarity">
    <text evidence="1">Belongs to the glycosyltransferase 4 family. MraY subfamily.</text>
</comment>
<evidence type="ECO:0000255" key="1">
    <source>
        <dbReference type="HAMAP-Rule" id="MF_00038"/>
    </source>
</evidence>
<accession>B9KEZ5</accession>
<name>MRAY_CAMLR</name>
<organism>
    <name type="scientific">Campylobacter lari (strain RM2100 / D67 / ATCC BAA-1060)</name>
    <dbReference type="NCBI Taxonomy" id="306263"/>
    <lineage>
        <taxon>Bacteria</taxon>
        <taxon>Pseudomonadati</taxon>
        <taxon>Campylobacterota</taxon>
        <taxon>Epsilonproteobacteria</taxon>
        <taxon>Campylobacterales</taxon>
        <taxon>Campylobacteraceae</taxon>
        <taxon>Campylobacter</taxon>
    </lineage>
</organism>
<keyword id="KW-0131">Cell cycle</keyword>
<keyword id="KW-0132">Cell division</keyword>
<keyword id="KW-0997">Cell inner membrane</keyword>
<keyword id="KW-1003">Cell membrane</keyword>
<keyword id="KW-0133">Cell shape</keyword>
<keyword id="KW-0961">Cell wall biogenesis/degradation</keyword>
<keyword id="KW-0460">Magnesium</keyword>
<keyword id="KW-0472">Membrane</keyword>
<keyword id="KW-0479">Metal-binding</keyword>
<keyword id="KW-0573">Peptidoglycan synthesis</keyword>
<keyword id="KW-1185">Reference proteome</keyword>
<keyword id="KW-0808">Transferase</keyword>
<keyword id="KW-0812">Transmembrane</keyword>
<keyword id="KW-1133">Transmembrane helix</keyword>